<dbReference type="EC" id="7.1.1.-" evidence="1"/>
<dbReference type="EMBL" id="AY958085">
    <property type="protein sequence ID" value="AAX45705.1"/>
    <property type="molecule type" value="Genomic_DNA"/>
</dbReference>
<dbReference type="RefSeq" id="YP_636373.1">
    <property type="nucleotide sequence ID" value="NC_008116.1"/>
</dbReference>
<dbReference type="SMR" id="Q32S03"/>
<dbReference type="GeneID" id="4108662"/>
<dbReference type="GO" id="GO:0009535">
    <property type="term" value="C:chloroplast thylakoid membrane"/>
    <property type="evidence" value="ECO:0007669"/>
    <property type="project" value="UniProtKB-SubCell"/>
</dbReference>
<dbReference type="GO" id="GO:0051539">
    <property type="term" value="F:4 iron, 4 sulfur cluster binding"/>
    <property type="evidence" value="ECO:0007669"/>
    <property type="project" value="UniProtKB-KW"/>
</dbReference>
<dbReference type="GO" id="GO:0005506">
    <property type="term" value="F:iron ion binding"/>
    <property type="evidence" value="ECO:0007669"/>
    <property type="project" value="UniProtKB-UniRule"/>
</dbReference>
<dbReference type="GO" id="GO:0008137">
    <property type="term" value="F:NADH dehydrogenase (ubiquinone) activity"/>
    <property type="evidence" value="ECO:0007669"/>
    <property type="project" value="InterPro"/>
</dbReference>
<dbReference type="GO" id="GO:0048038">
    <property type="term" value="F:quinone binding"/>
    <property type="evidence" value="ECO:0007669"/>
    <property type="project" value="UniProtKB-KW"/>
</dbReference>
<dbReference type="GO" id="GO:0019684">
    <property type="term" value="P:photosynthesis, light reaction"/>
    <property type="evidence" value="ECO:0007669"/>
    <property type="project" value="UniProtKB-UniRule"/>
</dbReference>
<dbReference type="Gene3D" id="3.30.70.3270">
    <property type="match status" value="1"/>
</dbReference>
<dbReference type="HAMAP" id="MF_01351">
    <property type="entry name" value="NDH1_NuoI"/>
    <property type="match status" value="1"/>
</dbReference>
<dbReference type="InterPro" id="IPR017896">
    <property type="entry name" value="4Fe4S_Fe-S-bd"/>
</dbReference>
<dbReference type="InterPro" id="IPR017900">
    <property type="entry name" value="4Fe4S_Fe_S_CS"/>
</dbReference>
<dbReference type="InterPro" id="IPR010226">
    <property type="entry name" value="NADH_quinone_OxRdtase_chainI"/>
</dbReference>
<dbReference type="InterPro" id="IPR004497">
    <property type="entry name" value="NDHI"/>
</dbReference>
<dbReference type="NCBIfam" id="TIGR00403">
    <property type="entry name" value="ndhI"/>
    <property type="match status" value="1"/>
</dbReference>
<dbReference type="NCBIfam" id="TIGR01971">
    <property type="entry name" value="NuoI"/>
    <property type="match status" value="1"/>
</dbReference>
<dbReference type="NCBIfam" id="NF004537">
    <property type="entry name" value="PRK05888.1-3"/>
    <property type="match status" value="1"/>
</dbReference>
<dbReference type="PANTHER" id="PTHR47275">
    <property type="entry name" value="NAD(P)H-QUINONE OXIDOREDUCTASE SUBUNIT I, CHLOROPLASTIC"/>
    <property type="match status" value="1"/>
</dbReference>
<dbReference type="PANTHER" id="PTHR47275:SF1">
    <property type="entry name" value="NAD(P)H-QUINONE OXIDOREDUCTASE SUBUNIT I, CHLOROPLASTIC"/>
    <property type="match status" value="1"/>
</dbReference>
<dbReference type="Pfam" id="PF12838">
    <property type="entry name" value="Fer4_7"/>
    <property type="match status" value="1"/>
</dbReference>
<dbReference type="SUPFAM" id="SSF54862">
    <property type="entry name" value="4Fe-4S ferredoxins"/>
    <property type="match status" value="1"/>
</dbReference>
<dbReference type="PROSITE" id="PS00198">
    <property type="entry name" value="4FE4S_FER_1"/>
    <property type="match status" value="2"/>
</dbReference>
<dbReference type="PROSITE" id="PS51379">
    <property type="entry name" value="4FE4S_FER_2"/>
    <property type="match status" value="2"/>
</dbReference>
<comment type="function">
    <text evidence="1">NDH shuttles electrons from NAD(P)H:plastoquinone, via FMN and iron-sulfur (Fe-S) centers, to quinones in the photosynthetic chain and possibly in a chloroplast respiratory chain. The immediate electron acceptor for the enzyme in this species is believed to be plastoquinone. Couples the redox reaction to proton translocation, and thus conserves the redox energy in a proton gradient.</text>
</comment>
<comment type="catalytic activity">
    <reaction evidence="1">
        <text>a plastoquinone + NADH + (n+1) H(+)(in) = a plastoquinol + NAD(+) + n H(+)(out)</text>
        <dbReference type="Rhea" id="RHEA:42608"/>
        <dbReference type="Rhea" id="RHEA-COMP:9561"/>
        <dbReference type="Rhea" id="RHEA-COMP:9562"/>
        <dbReference type="ChEBI" id="CHEBI:15378"/>
        <dbReference type="ChEBI" id="CHEBI:17757"/>
        <dbReference type="ChEBI" id="CHEBI:57540"/>
        <dbReference type="ChEBI" id="CHEBI:57945"/>
        <dbReference type="ChEBI" id="CHEBI:62192"/>
    </reaction>
</comment>
<comment type="catalytic activity">
    <reaction evidence="1">
        <text>a plastoquinone + NADPH + (n+1) H(+)(in) = a plastoquinol + NADP(+) + n H(+)(out)</text>
        <dbReference type="Rhea" id="RHEA:42612"/>
        <dbReference type="Rhea" id="RHEA-COMP:9561"/>
        <dbReference type="Rhea" id="RHEA-COMP:9562"/>
        <dbReference type="ChEBI" id="CHEBI:15378"/>
        <dbReference type="ChEBI" id="CHEBI:17757"/>
        <dbReference type="ChEBI" id="CHEBI:57783"/>
        <dbReference type="ChEBI" id="CHEBI:58349"/>
        <dbReference type="ChEBI" id="CHEBI:62192"/>
    </reaction>
</comment>
<comment type="cofactor">
    <cofactor evidence="1">
        <name>[4Fe-4S] cluster</name>
        <dbReference type="ChEBI" id="CHEBI:49883"/>
    </cofactor>
    <text evidence="1">Binds 2 [4Fe-4S] clusters per subunit.</text>
</comment>
<comment type="subunit">
    <text evidence="1">NDH is composed of at least 16 different subunits, 5 of which are encoded in the nucleus.</text>
</comment>
<comment type="subcellular location">
    <subcellularLocation>
        <location evidence="1">Plastid</location>
        <location evidence="1">Chloroplast thylakoid membrane</location>
        <topology evidence="1">Peripheral membrane protein</topology>
    </subcellularLocation>
</comment>
<comment type="similarity">
    <text evidence="1">Belongs to the complex I 23 kDa subunit family.</text>
</comment>
<accession>Q32S03</accession>
<gene>
    <name evidence="1" type="primary">ndhI</name>
</gene>
<geneLocation type="chloroplast"/>
<sequence length="181" mass="20865">MINGLKNYSQDALRAARYIGQGFFVTLDHMNRTPITIQYPYEKLIPSERFRGRIHFEFDKCIACEVCVRVCPINLPVVDWEFQKSMKKKQLKSYSIDFGVCIFCGNCVEFCPTNCLSMTEEYELSSYDRHELNYDQVALGRLPNPASKDPLVHPILGLGYLQKKLLTQSTESKTITNFDKS</sequence>
<protein>
    <recommendedName>
        <fullName evidence="1">NAD(P)H-quinone oxidoreductase subunit I, chloroplastic</fullName>
        <ecNumber evidence="1">7.1.1.-</ecNumber>
    </recommendedName>
    <alternativeName>
        <fullName evidence="1">NAD(P)H dehydrogenase subunit I</fullName>
        <shortName evidence="1">NDH subunit I</shortName>
    </alternativeName>
    <alternativeName>
        <fullName evidence="1">NADH-plastoquinone oxidoreductase subunit I</fullName>
    </alternativeName>
</protein>
<proteinExistence type="inferred from homology"/>
<evidence type="ECO:0000255" key="1">
    <source>
        <dbReference type="HAMAP-Rule" id="MF_01351"/>
    </source>
</evidence>
<keyword id="KW-0004">4Fe-4S</keyword>
<keyword id="KW-0150">Chloroplast</keyword>
<keyword id="KW-0408">Iron</keyword>
<keyword id="KW-0411">Iron-sulfur</keyword>
<keyword id="KW-0472">Membrane</keyword>
<keyword id="KW-0479">Metal-binding</keyword>
<keyword id="KW-0520">NAD</keyword>
<keyword id="KW-0521">NADP</keyword>
<keyword id="KW-0934">Plastid</keyword>
<keyword id="KW-0618">Plastoquinone</keyword>
<keyword id="KW-0874">Quinone</keyword>
<keyword id="KW-0677">Repeat</keyword>
<keyword id="KW-0793">Thylakoid</keyword>
<keyword id="KW-1278">Translocase</keyword>
<organism>
    <name type="scientific">Staurastrum punctulatum</name>
    <name type="common">Green alga</name>
    <name type="synonym">Cosmoastrum punctulatum</name>
    <dbReference type="NCBI Taxonomy" id="102822"/>
    <lineage>
        <taxon>Eukaryota</taxon>
        <taxon>Viridiplantae</taxon>
        <taxon>Streptophyta</taxon>
        <taxon>Zygnematophyceae</taxon>
        <taxon>Zygnematophycidae</taxon>
        <taxon>Desmidiales</taxon>
        <taxon>Desmidiaceae</taxon>
        <taxon>Staurastrum</taxon>
    </lineage>
</organism>
<name>NDHI_STAPU</name>
<reference key="1">
    <citation type="journal article" date="2005" name="BMC Biol.">
        <title>The complete chloroplast DNA sequences of the charophycean green algae Staurastrum and Zygnema reveal that the chloroplast genome underwent extensive changes during the evolution of the Zygnematales.</title>
        <authorList>
            <person name="Turmel M."/>
            <person name="Otis C."/>
            <person name="Lemieux C."/>
        </authorList>
    </citation>
    <scope>NUCLEOTIDE SEQUENCE [LARGE SCALE GENOMIC DNA]</scope>
</reference>
<feature type="chain" id="PRO_0000245676" description="NAD(P)H-quinone oxidoreductase subunit I, chloroplastic">
    <location>
        <begin position="1"/>
        <end position="181"/>
    </location>
</feature>
<feature type="domain" description="4Fe-4S ferredoxin-type 1" evidence="1">
    <location>
        <begin position="52"/>
        <end position="81"/>
    </location>
</feature>
<feature type="domain" description="4Fe-4S ferredoxin-type 2" evidence="1">
    <location>
        <begin position="92"/>
        <end position="121"/>
    </location>
</feature>
<feature type="binding site" evidence="1">
    <location>
        <position position="61"/>
    </location>
    <ligand>
        <name>[4Fe-4S] cluster</name>
        <dbReference type="ChEBI" id="CHEBI:49883"/>
        <label>1</label>
    </ligand>
</feature>
<feature type="binding site" evidence="1">
    <location>
        <position position="64"/>
    </location>
    <ligand>
        <name>[4Fe-4S] cluster</name>
        <dbReference type="ChEBI" id="CHEBI:49883"/>
        <label>1</label>
    </ligand>
</feature>
<feature type="binding site" evidence="1">
    <location>
        <position position="67"/>
    </location>
    <ligand>
        <name>[4Fe-4S] cluster</name>
        <dbReference type="ChEBI" id="CHEBI:49883"/>
        <label>1</label>
    </ligand>
</feature>
<feature type="binding site" evidence="1">
    <location>
        <position position="71"/>
    </location>
    <ligand>
        <name>[4Fe-4S] cluster</name>
        <dbReference type="ChEBI" id="CHEBI:49883"/>
        <label>2</label>
    </ligand>
</feature>
<feature type="binding site" evidence="1">
    <location>
        <position position="101"/>
    </location>
    <ligand>
        <name>[4Fe-4S] cluster</name>
        <dbReference type="ChEBI" id="CHEBI:49883"/>
        <label>2</label>
    </ligand>
</feature>
<feature type="binding site" evidence="1">
    <location>
        <position position="104"/>
    </location>
    <ligand>
        <name>[4Fe-4S] cluster</name>
        <dbReference type="ChEBI" id="CHEBI:49883"/>
        <label>2</label>
    </ligand>
</feature>
<feature type="binding site" evidence="1">
    <location>
        <position position="107"/>
    </location>
    <ligand>
        <name>[4Fe-4S] cluster</name>
        <dbReference type="ChEBI" id="CHEBI:49883"/>
        <label>2</label>
    </ligand>
</feature>
<feature type="binding site" evidence="1">
    <location>
        <position position="111"/>
    </location>
    <ligand>
        <name>[4Fe-4S] cluster</name>
        <dbReference type="ChEBI" id="CHEBI:49883"/>
        <label>1</label>
    </ligand>
</feature>